<sequence>MTIEFNPSKRATLGVEWELQLVDRDSGHLRQDAQKLLEELPELSGAESNPPLRHELMQSTIEVVTGICETVDEVKEDLSATVARLTQAADGRGIELACAGTHPIDDWRDQEFAPSQRYSELIEQMQWLARRILTFGVHVHVGVTDRDKVIPIVNALSRYLPHFLALTASSPFWSGHDTGLASSRSIVFGALPTAGPPPRLAHWGAFEEYMDTLLRAGTITSIKEVWWDIRPHPEFGTVEIRMFDGIPTVREVGMAAALSQSLVQLFEQQLDRGYRLPSPSSWVVTDNKWRATRYGLDARIIIDERGSTVPLRDDLYELLHELRPIAERLGCAEDLDVVAEILHYGASYERQRAIIRQGGVLKDVVDALVKEFRAGAPAVGSSHGRTDPSRNGGPSHAGA</sequence>
<name>GCS2_THEFY</name>
<keyword id="KW-0067">ATP-binding</keyword>
<keyword id="KW-0436">Ligase</keyword>
<keyword id="KW-0547">Nucleotide-binding</keyword>
<accession>Q47LS4</accession>
<dbReference type="EC" id="6.3.2.2" evidence="1"/>
<dbReference type="EMBL" id="CP000088">
    <property type="protein sequence ID" value="AAZ56598.1"/>
    <property type="molecule type" value="Genomic_DNA"/>
</dbReference>
<dbReference type="RefSeq" id="WP_011292988.1">
    <property type="nucleotide sequence ID" value="NC_007333.1"/>
</dbReference>
<dbReference type="SMR" id="Q47LS4"/>
<dbReference type="STRING" id="269800.Tfu_2565"/>
<dbReference type="KEGG" id="tfu:Tfu_2565"/>
<dbReference type="eggNOG" id="COG2170">
    <property type="taxonomic scope" value="Bacteria"/>
</dbReference>
<dbReference type="HOGENOM" id="CLU_044848_1_0_11"/>
<dbReference type="OrthoDB" id="9769628at2"/>
<dbReference type="GO" id="GO:0005524">
    <property type="term" value="F:ATP binding"/>
    <property type="evidence" value="ECO:0007669"/>
    <property type="project" value="UniProtKB-KW"/>
</dbReference>
<dbReference type="GO" id="GO:0004357">
    <property type="term" value="F:glutamate-cysteine ligase activity"/>
    <property type="evidence" value="ECO:0007669"/>
    <property type="project" value="UniProtKB-EC"/>
</dbReference>
<dbReference type="GO" id="GO:0042398">
    <property type="term" value="P:modified amino acid biosynthetic process"/>
    <property type="evidence" value="ECO:0007669"/>
    <property type="project" value="InterPro"/>
</dbReference>
<dbReference type="Gene3D" id="3.30.590.20">
    <property type="match status" value="1"/>
</dbReference>
<dbReference type="HAMAP" id="MF_01609">
    <property type="entry name" value="Glu_cys_ligase_2"/>
    <property type="match status" value="1"/>
</dbReference>
<dbReference type="InterPro" id="IPR050141">
    <property type="entry name" value="GCL_type2/YbdK_subfam"/>
</dbReference>
<dbReference type="InterPro" id="IPR006336">
    <property type="entry name" value="GCS2"/>
</dbReference>
<dbReference type="InterPro" id="IPR014746">
    <property type="entry name" value="Gln_synth/guanido_kin_cat_dom"/>
</dbReference>
<dbReference type="InterPro" id="IPR011793">
    <property type="entry name" value="YbdK"/>
</dbReference>
<dbReference type="NCBIfam" id="TIGR02050">
    <property type="entry name" value="gshA_cyan_rel"/>
    <property type="match status" value="1"/>
</dbReference>
<dbReference type="NCBIfam" id="NF010042">
    <property type="entry name" value="PRK13517.1-2"/>
    <property type="match status" value="1"/>
</dbReference>
<dbReference type="NCBIfam" id="NF010043">
    <property type="entry name" value="PRK13517.1-3"/>
    <property type="match status" value="1"/>
</dbReference>
<dbReference type="PANTHER" id="PTHR36510">
    <property type="entry name" value="GLUTAMATE--CYSTEINE LIGASE 2-RELATED"/>
    <property type="match status" value="1"/>
</dbReference>
<dbReference type="PANTHER" id="PTHR36510:SF1">
    <property type="entry name" value="GLUTAMATE--CYSTEINE LIGASE 2-RELATED"/>
    <property type="match status" value="1"/>
</dbReference>
<dbReference type="Pfam" id="PF04107">
    <property type="entry name" value="GCS2"/>
    <property type="match status" value="1"/>
</dbReference>
<dbReference type="SUPFAM" id="SSF55931">
    <property type="entry name" value="Glutamine synthetase/guanido kinase"/>
    <property type="match status" value="1"/>
</dbReference>
<proteinExistence type="inferred from homology"/>
<gene>
    <name type="ordered locus">Tfu_2565</name>
</gene>
<reference key="1">
    <citation type="journal article" date="2007" name="J. Bacteriol.">
        <title>Genome sequence and analysis of the soil cellulolytic actinomycete Thermobifida fusca YX.</title>
        <authorList>
            <person name="Lykidis A."/>
            <person name="Mavromatis K."/>
            <person name="Ivanova N."/>
            <person name="Anderson I."/>
            <person name="Land M."/>
            <person name="DiBartolo G."/>
            <person name="Martinez M."/>
            <person name="Lapidus A."/>
            <person name="Lucas S."/>
            <person name="Copeland A."/>
            <person name="Richardson P."/>
            <person name="Wilson D.B."/>
            <person name="Kyrpides N."/>
        </authorList>
    </citation>
    <scope>NUCLEOTIDE SEQUENCE [LARGE SCALE GENOMIC DNA]</scope>
    <source>
        <strain>YX</strain>
    </source>
</reference>
<evidence type="ECO:0000255" key="1">
    <source>
        <dbReference type="HAMAP-Rule" id="MF_01609"/>
    </source>
</evidence>
<evidence type="ECO:0000256" key="2">
    <source>
        <dbReference type="SAM" id="MobiDB-lite"/>
    </source>
</evidence>
<comment type="function">
    <text evidence="1">ATP-dependent carboxylate-amine ligase which exhibits weak glutamate--cysteine ligase activity.</text>
</comment>
<comment type="catalytic activity">
    <reaction evidence="1">
        <text>L-cysteine + L-glutamate + ATP = gamma-L-glutamyl-L-cysteine + ADP + phosphate + H(+)</text>
        <dbReference type="Rhea" id="RHEA:13285"/>
        <dbReference type="ChEBI" id="CHEBI:15378"/>
        <dbReference type="ChEBI" id="CHEBI:29985"/>
        <dbReference type="ChEBI" id="CHEBI:30616"/>
        <dbReference type="ChEBI" id="CHEBI:35235"/>
        <dbReference type="ChEBI" id="CHEBI:43474"/>
        <dbReference type="ChEBI" id="CHEBI:58173"/>
        <dbReference type="ChEBI" id="CHEBI:456216"/>
        <dbReference type="EC" id="6.3.2.2"/>
    </reaction>
</comment>
<comment type="similarity">
    <text evidence="1">Belongs to the glutamate--cysteine ligase type 2 family. YbdK subfamily.</text>
</comment>
<protein>
    <recommendedName>
        <fullName evidence="1">Putative glutamate--cysteine ligase 2</fullName>
        <ecNumber evidence="1">6.3.2.2</ecNumber>
    </recommendedName>
    <alternativeName>
        <fullName evidence="1">Gamma-glutamylcysteine synthetase 2</fullName>
        <shortName evidence="1">GCS 2</shortName>
        <shortName evidence="1">Gamma-GCS 2</shortName>
    </alternativeName>
</protein>
<organism>
    <name type="scientific">Thermobifida fusca (strain YX)</name>
    <dbReference type="NCBI Taxonomy" id="269800"/>
    <lineage>
        <taxon>Bacteria</taxon>
        <taxon>Bacillati</taxon>
        <taxon>Actinomycetota</taxon>
        <taxon>Actinomycetes</taxon>
        <taxon>Streptosporangiales</taxon>
        <taxon>Nocardiopsidaceae</taxon>
        <taxon>Thermobifida</taxon>
    </lineage>
</organism>
<feature type="chain" id="PRO_0000255817" description="Putative glutamate--cysteine ligase 2">
    <location>
        <begin position="1"/>
        <end position="399"/>
    </location>
</feature>
<feature type="region of interest" description="Disordered" evidence="2">
    <location>
        <begin position="377"/>
        <end position="399"/>
    </location>
</feature>